<dbReference type="EC" id="1.8.4.11" evidence="1"/>
<dbReference type="EMBL" id="AE016853">
    <property type="protein sequence ID" value="AAO53949.1"/>
    <property type="molecule type" value="Genomic_DNA"/>
</dbReference>
<dbReference type="RefSeq" id="NP_790254.1">
    <property type="nucleotide sequence ID" value="NC_004578.1"/>
</dbReference>
<dbReference type="RefSeq" id="WP_005763591.1">
    <property type="nucleotide sequence ID" value="NC_004578.1"/>
</dbReference>
<dbReference type="SMR" id="Q88AI5"/>
<dbReference type="STRING" id="223283.PSPTO_0405"/>
<dbReference type="GeneID" id="1182014"/>
<dbReference type="KEGG" id="pst:PSPTO_0405"/>
<dbReference type="PATRIC" id="fig|223283.9.peg.424"/>
<dbReference type="eggNOG" id="COG0225">
    <property type="taxonomic scope" value="Bacteria"/>
</dbReference>
<dbReference type="HOGENOM" id="CLU_031040_10_3_6"/>
<dbReference type="OrthoDB" id="4174719at2"/>
<dbReference type="PhylomeDB" id="Q88AI5"/>
<dbReference type="Proteomes" id="UP000002515">
    <property type="component" value="Chromosome"/>
</dbReference>
<dbReference type="GO" id="GO:0005737">
    <property type="term" value="C:cytoplasm"/>
    <property type="evidence" value="ECO:0007669"/>
    <property type="project" value="TreeGrafter"/>
</dbReference>
<dbReference type="GO" id="GO:0036456">
    <property type="term" value="F:L-methionine-(S)-S-oxide reductase activity"/>
    <property type="evidence" value="ECO:0007669"/>
    <property type="project" value="TreeGrafter"/>
</dbReference>
<dbReference type="GO" id="GO:0008113">
    <property type="term" value="F:peptide-methionine (S)-S-oxide reductase activity"/>
    <property type="evidence" value="ECO:0007669"/>
    <property type="project" value="UniProtKB-UniRule"/>
</dbReference>
<dbReference type="GO" id="GO:0034599">
    <property type="term" value="P:cellular response to oxidative stress"/>
    <property type="evidence" value="ECO:0007669"/>
    <property type="project" value="TreeGrafter"/>
</dbReference>
<dbReference type="GO" id="GO:0036211">
    <property type="term" value="P:protein modification process"/>
    <property type="evidence" value="ECO:0007669"/>
    <property type="project" value="UniProtKB-UniRule"/>
</dbReference>
<dbReference type="FunFam" id="3.30.1060.10:FF:000001">
    <property type="entry name" value="Peptide methionine sulfoxide reductase MsrA"/>
    <property type="match status" value="1"/>
</dbReference>
<dbReference type="Gene3D" id="3.30.1060.10">
    <property type="entry name" value="Peptide methionine sulphoxide reductase MsrA"/>
    <property type="match status" value="1"/>
</dbReference>
<dbReference type="HAMAP" id="MF_01401">
    <property type="entry name" value="MsrA"/>
    <property type="match status" value="1"/>
</dbReference>
<dbReference type="InterPro" id="IPR002569">
    <property type="entry name" value="Met_Sox_Rdtase_MsrA_dom"/>
</dbReference>
<dbReference type="InterPro" id="IPR036509">
    <property type="entry name" value="Met_Sox_Rdtase_MsrA_sf"/>
</dbReference>
<dbReference type="InterPro" id="IPR050162">
    <property type="entry name" value="MsrA_MetSO_reductase"/>
</dbReference>
<dbReference type="NCBIfam" id="TIGR00401">
    <property type="entry name" value="msrA"/>
    <property type="match status" value="1"/>
</dbReference>
<dbReference type="PANTHER" id="PTHR42799">
    <property type="entry name" value="MITOCHONDRIAL PEPTIDE METHIONINE SULFOXIDE REDUCTASE"/>
    <property type="match status" value="1"/>
</dbReference>
<dbReference type="PANTHER" id="PTHR42799:SF2">
    <property type="entry name" value="MITOCHONDRIAL PEPTIDE METHIONINE SULFOXIDE REDUCTASE"/>
    <property type="match status" value="1"/>
</dbReference>
<dbReference type="Pfam" id="PF01625">
    <property type="entry name" value="PMSR"/>
    <property type="match status" value="1"/>
</dbReference>
<dbReference type="SUPFAM" id="SSF55068">
    <property type="entry name" value="Peptide methionine sulfoxide reductase"/>
    <property type="match status" value="1"/>
</dbReference>
<keyword id="KW-0560">Oxidoreductase</keyword>
<keyword id="KW-1185">Reference proteome</keyword>
<name>MSRA_PSESM</name>
<reference key="1">
    <citation type="journal article" date="2003" name="Proc. Natl. Acad. Sci. U.S.A.">
        <title>The complete genome sequence of the Arabidopsis and tomato pathogen Pseudomonas syringae pv. tomato DC3000.</title>
        <authorList>
            <person name="Buell C.R."/>
            <person name="Joardar V."/>
            <person name="Lindeberg M."/>
            <person name="Selengut J."/>
            <person name="Paulsen I.T."/>
            <person name="Gwinn M.L."/>
            <person name="Dodson R.J."/>
            <person name="DeBoy R.T."/>
            <person name="Durkin A.S."/>
            <person name="Kolonay J.F."/>
            <person name="Madupu R."/>
            <person name="Daugherty S.C."/>
            <person name="Brinkac L.M."/>
            <person name="Beanan M.J."/>
            <person name="Haft D.H."/>
            <person name="Nelson W.C."/>
            <person name="Davidsen T.M."/>
            <person name="Zafar N."/>
            <person name="Zhou L."/>
            <person name="Liu J."/>
            <person name="Yuan Q."/>
            <person name="Khouri H.M."/>
            <person name="Fedorova N.B."/>
            <person name="Tran B."/>
            <person name="Russell D."/>
            <person name="Berry K.J."/>
            <person name="Utterback T.R."/>
            <person name="Van Aken S.E."/>
            <person name="Feldblyum T.V."/>
            <person name="D'Ascenzo M."/>
            <person name="Deng W.-L."/>
            <person name="Ramos A.R."/>
            <person name="Alfano J.R."/>
            <person name="Cartinhour S."/>
            <person name="Chatterjee A.K."/>
            <person name="Delaney T.P."/>
            <person name="Lazarowitz S.G."/>
            <person name="Martin G.B."/>
            <person name="Schneider D.J."/>
            <person name="Tang X."/>
            <person name="Bender C.L."/>
            <person name="White O."/>
            <person name="Fraser C.M."/>
            <person name="Collmer A."/>
        </authorList>
    </citation>
    <scope>NUCLEOTIDE SEQUENCE [LARGE SCALE GENOMIC DNA]</scope>
    <source>
        <strain>ATCC BAA-871 / DC3000</strain>
    </source>
</reference>
<sequence length="215" mass="23288">MTLRSEILVNKNVLPTAEQALPGRETPMTLPETHFVNGNPLLGPFTSNVEFAIFGLGCFWGAERRLWQQEGVVSTVAGYAGGFTPNPTYEEVCSGLTGHTEVVLVVYEPEKISYDSLLKVFWEAHNPTQGMRQGNDIGTQYRSVIYCTTPEQLAAAKASADAFQAELSKAGLGGITTEIEEAPTVYFAETYHQQYLAKNPQGYCGLGGTGVCLPA</sequence>
<comment type="function">
    <text evidence="1">Has an important function as a repair enzyme for proteins that have been inactivated by oxidation. Catalyzes the reversible oxidation-reduction of methionine sulfoxide in proteins to methionine.</text>
</comment>
<comment type="catalytic activity">
    <reaction evidence="1">
        <text>L-methionyl-[protein] + [thioredoxin]-disulfide + H2O = L-methionyl-(S)-S-oxide-[protein] + [thioredoxin]-dithiol</text>
        <dbReference type="Rhea" id="RHEA:14217"/>
        <dbReference type="Rhea" id="RHEA-COMP:10698"/>
        <dbReference type="Rhea" id="RHEA-COMP:10700"/>
        <dbReference type="Rhea" id="RHEA-COMP:12313"/>
        <dbReference type="Rhea" id="RHEA-COMP:12315"/>
        <dbReference type="ChEBI" id="CHEBI:15377"/>
        <dbReference type="ChEBI" id="CHEBI:16044"/>
        <dbReference type="ChEBI" id="CHEBI:29950"/>
        <dbReference type="ChEBI" id="CHEBI:44120"/>
        <dbReference type="ChEBI" id="CHEBI:50058"/>
        <dbReference type="EC" id="1.8.4.11"/>
    </reaction>
</comment>
<comment type="catalytic activity">
    <reaction evidence="1">
        <text>[thioredoxin]-disulfide + L-methionine + H2O = L-methionine (S)-S-oxide + [thioredoxin]-dithiol</text>
        <dbReference type="Rhea" id="RHEA:19993"/>
        <dbReference type="Rhea" id="RHEA-COMP:10698"/>
        <dbReference type="Rhea" id="RHEA-COMP:10700"/>
        <dbReference type="ChEBI" id="CHEBI:15377"/>
        <dbReference type="ChEBI" id="CHEBI:29950"/>
        <dbReference type="ChEBI" id="CHEBI:50058"/>
        <dbReference type="ChEBI" id="CHEBI:57844"/>
        <dbReference type="ChEBI" id="CHEBI:58772"/>
        <dbReference type="EC" id="1.8.4.11"/>
    </reaction>
</comment>
<comment type="similarity">
    <text evidence="1">Belongs to the MsrA Met sulfoxide reductase family.</text>
</comment>
<feature type="chain" id="PRO_0000138569" description="Peptide methionine sulfoxide reductase MsrA">
    <location>
        <begin position="1"/>
        <end position="215"/>
    </location>
</feature>
<feature type="active site" evidence="1">
    <location>
        <position position="58"/>
    </location>
</feature>
<organism>
    <name type="scientific">Pseudomonas syringae pv. tomato (strain ATCC BAA-871 / DC3000)</name>
    <dbReference type="NCBI Taxonomy" id="223283"/>
    <lineage>
        <taxon>Bacteria</taxon>
        <taxon>Pseudomonadati</taxon>
        <taxon>Pseudomonadota</taxon>
        <taxon>Gammaproteobacteria</taxon>
        <taxon>Pseudomonadales</taxon>
        <taxon>Pseudomonadaceae</taxon>
        <taxon>Pseudomonas</taxon>
    </lineage>
</organism>
<evidence type="ECO:0000255" key="1">
    <source>
        <dbReference type="HAMAP-Rule" id="MF_01401"/>
    </source>
</evidence>
<proteinExistence type="inferred from homology"/>
<gene>
    <name evidence="1" type="primary">msrA</name>
    <name type="ordered locus">PSPTO_0405</name>
</gene>
<protein>
    <recommendedName>
        <fullName evidence="1">Peptide methionine sulfoxide reductase MsrA</fullName>
        <shortName evidence="1">Protein-methionine-S-oxide reductase</shortName>
        <ecNumber evidence="1">1.8.4.11</ecNumber>
    </recommendedName>
    <alternativeName>
        <fullName evidence="1">Peptide-methionine (S)-S-oxide reductase</fullName>
        <shortName evidence="1">Peptide Met(O) reductase</shortName>
    </alternativeName>
</protein>
<accession>Q88AI5</accession>